<feature type="signal peptide" evidence="2">
    <location>
        <begin position="1"/>
        <end position="18"/>
    </location>
</feature>
<feature type="chain" id="PRO_5010143017" description="Cyclase-like protein 1">
    <location>
        <begin position="19"/>
        <end position="274"/>
    </location>
</feature>
<comment type="function">
    <text evidence="1">May be involved in response to stresses.</text>
</comment>
<comment type="subcellular location">
    <subcellularLocation>
        <location evidence="1">Secreted</location>
        <location evidence="1">Extracellular space</location>
        <location evidence="1">Extracellular matrix</location>
    </subcellularLocation>
</comment>
<comment type="tissue specificity">
    <text evidence="3">Highly expressed in leaf sheaths. Expressed in leaf collars.</text>
</comment>
<comment type="induction">
    <text>Induced by cold, salt and drought stresses. Induced by abscisic acid, auxine, brassinosteroid, ethylene, gibberellin, jasmonate, kinetin, reactive oxygen species and salicylate.</text>
</comment>
<comment type="similarity">
    <text evidence="5">Belongs to the Cyclase 1 superfamily.</text>
</comment>
<comment type="sequence caution" evidence="5">
    <conflict type="erroneous gene model prediction">
        <sequence resource="EMBL-CDS" id="BAF08040"/>
    </conflict>
</comment>
<comment type="sequence caution" evidence="5">
    <conflict type="erroneous gene model prediction">
        <sequence resource="EMBL-CDS" id="BAS77361"/>
    </conflict>
</comment>
<reference key="1">
    <citation type="journal article" date="2005" name="Nature">
        <title>The map-based sequence of the rice genome.</title>
        <authorList>
            <consortium name="International rice genome sequencing project (IRGSP)"/>
        </authorList>
    </citation>
    <scope>NUCLEOTIDE SEQUENCE [LARGE SCALE GENOMIC DNA]</scope>
    <source>
        <strain>cv. Nipponbare</strain>
    </source>
</reference>
<reference key="2">
    <citation type="journal article" date="2008" name="Nucleic Acids Res.">
        <title>The rice annotation project database (RAP-DB): 2008 update.</title>
        <authorList>
            <consortium name="The rice annotation project (RAP)"/>
        </authorList>
    </citation>
    <scope>GENOME REANNOTATION</scope>
    <source>
        <strain>cv. Nipponbare</strain>
    </source>
</reference>
<reference key="3">
    <citation type="journal article" date="2013" name="Rice">
        <title>Improvement of the Oryza sativa Nipponbare reference genome using next generation sequence and optical map data.</title>
        <authorList>
            <person name="Kawahara Y."/>
            <person name="de la Bastide M."/>
            <person name="Hamilton J.P."/>
            <person name="Kanamori H."/>
            <person name="McCombie W.R."/>
            <person name="Ouyang S."/>
            <person name="Schwartz D.C."/>
            <person name="Tanaka T."/>
            <person name="Wu J."/>
            <person name="Zhou S."/>
            <person name="Childs K.L."/>
            <person name="Davidson R.M."/>
            <person name="Lin H."/>
            <person name="Quesada-Ocampo L."/>
            <person name="Vaillancourt B."/>
            <person name="Sakai H."/>
            <person name="Lee S.S."/>
            <person name="Kim J."/>
            <person name="Numa H."/>
            <person name="Itoh T."/>
            <person name="Buell C.R."/>
            <person name="Matsumoto T."/>
        </authorList>
    </citation>
    <scope>GENOME REANNOTATION</scope>
    <source>
        <strain>cv. Nipponbare</strain>
    </source>
</reference>
<reference key="4">
    <citation type="submission" date="2007-09" db="EMBL/GenBank/DDBJ databases">
        <title>Oryza sativa full length cDNA.</title>
        <authorList>
            <consortium name="The rice full-length cDNA consortium"/>
        </authorList>
    </citation>
    <scope>NUCLEOTIDE SEQUENCE [LARGE SCALE MRNA]</scope>
    <source>
        <strain>cv. Nipponbare</strain>
    </source>
</reference>
<reference key="5">
    <citation type="journal article" date="2015" name="J. Plant Physiol.">
        <title>Characterization of a novel cyclase-like gene family involved in controlling stress tolerance in rice.</title>
        <authorList>
            <person name="Qin Y."/>
            <person name="Shen X."/>
            <person name="Wang N."/>
            <person name="Ding X."/>
        </authorList>
    </citation>
    <scope>TISSUE SPECIFICITY</scope>
    <scope>INDUCTION</scope>
    <scope>GENE FAMILY</scope>
    <scope>NOMENCLATURE</scope>
</reference>
<sequence length="274" mass="29394">MAASRLALLLLVLAVAAARHALPAAGSDAHPGYDGAEDTCGVPAAAAAAGRMEEYGGGRILDITHAYRADLPAFAPGAVTGPVVRLRDSMANGTLYNLSELKMECHMGTHVDAPGHMNQGHFAAGLDVDKLDLDLLNGPTLLVDTPRNTNITAKAMESLNIPKGVRRVLFRTLNTDRKLMWKKGGDLSYVGFTEDGAQWLVDNTDIKLVGIDYLSVAAYDHLITAHVVFFKFPNIILVEGLKLDDVKAGIYMLHCLPLRLVGSEGSPIRCILIK</sequence>
<evidence type="ECO:0000250" key="1">
    <source>
        <dbReference type="UniProtKB" id="Q6YX89"/>
    </source>
</evidence>
<evidence type="ECO:0000255" key="2"/>
<evidence type="ECO:0000269" key="3">
    <source>
    </source>
</evidence>
<evidence type="ECO:0000303" key="4">
    <source>
    </source>
</evidence>
<evidence type="ECO:0000305" key="5"/>
<evidence type="ECO:0000312" key="6">
    <source>
        <dbReference type="EMBL" id="BAD15421.1"/>
    </source>
</evidence>
<evidence type="ECO:0000312" key="7">
    <source>
        <dbReference type="EMBL" id="BAD15451.1"/>
    </source>
</evidence>
<evidence type="ECO:0000312" key="8">
    <source>
        <dbReference type="EMBL" id="BAS77361.1"/>
    </source>
</evidence>
<gene>
    <name evidence="4" type="primary">CYL1</name>
    <name evidence="8" type="ordered locus">Os02g0187100</name>
    <name evidence="5" type="ordered locus">LOC_Os02g09420</name>
    <name evidence="6" type="ORF">OJ1073_F05.22</name>
    <name evidence="7" type="ORF">OJ1115_B01.33</name>
</gene>
<protein>
    <recommendedName>
        <fullName evidence="4">Cyclase-like protein 1</fullName>
        <shortName evidence="4">OsCYL1</shortName>
    </recommendedName>
</protein>
<keyword id="KW-0272">Extracellular matrix</keyword>
<keyword id="KW-1185">Reference proteome</keyword>
<keyword id="KW-0964">Secreted</keyword>
<keyword id="KW-0732">Signal</keyword>
<keyword id="KW-0346">Stress response</keyword>
<name>CYL1_ORYSJ</name>
<proteinExistence type="evidence at transcript level"/>
<organism>
    <name type="scientific">Oryza sativa subsp. japonica</name>
    <name type="common">Rice</name>
    <dbReference type="NCBI Taxonomy" id="39947"/>
    <lineage>
        <taxon>Eukaryota</taxon>
        <taxon>Viridiplantae</taxon>
        <taxon>Streptophyta</taxon>
        <taxon>Embryophyta</taxon>
        <taxon>Tracheophyta</taxon>
        <taxon>Spermatophyta</taxon>
        <taxon>Magnoliopsida</taxon>
        <taxon>Liliopsida</taxon>
        <taxon>Poales</taxon>
        <taxon>Poaceae</taxon>
        <taxon>BOP clade</taxon>
        <taxon>Oryzoideae</taxon>
        <taxon>Oryzeae</taxon>
        <taxon>Oryzinae</taxon>
        <taxon>Oryza</taxon>
        <taxon>Oryza sativa</taxon>
    </lineage>
</organism>
<accession>Q6ZIF9</accession>
<accession>A0A0N7KEU1</accession>
<accession>Q0E398</accession>
<dbReference type="EMBL" id="AP003990">
    <property type="protein sequence ID" value="BAD15421.1"/>
    <property type="molecule type" value="Genomic_DNA"/>
</dbReference>
<dbReference type="EMBL" id="AP004000">
    <property type="protein sequence ID" value="BAD15451.1"/>
    <property type="molecule type" value="Genomic_DNA"/>
</dbReference>
<dbReference type="EMBL" id="AP008208">
    <property type="protein sequence ID" value="BAF08040.2"/>
    <property type="status" value="ALT_SEQ"/>
    <property type="molecule type" value="Genomic_DNA"/>
</dbReference>
<dbReference type="EMBL" id="AP014958">
    <property type="protein sequence ID" value="BAS77361.1"/>
    <property type="status" value="ALT_SEQ"/>
    <property type="molecule type" value="Genomic_DNA"/>
</dbReference>
<dbReference type="EMBL" id="AK287460">
    <property type="status" value="NOT_ANNOTATED_CDS"/>
    <property type="molecule type" value="mRNA"/>
</dbReference>
<dbReference type="SMR" id="Q6ZIF9"/>
<dbReference type="FunCoup" id="Q6ZIF9">
    <property type="interactions" value="3"/>
</dbReference>
<dbReference type="STRING" id="39947.Q6ZIF9"/>
<dbReference type="PaxDb" id="39947-Q6ZIF9"/>
<dbReference type="GeneID" id="4328545"/>
<dbReference type="KEGG" id="dosa:Os02g0187100"/>
<dbReference type="KEGG" id="osa:4328545"/>
<dbReference type="eggNOG" id="ENOG502QRBQ">
    <property type="taxonomic scope" value="Eukaryota"/>
</dbReference>
<dbReference type="InParanoid" id="Q6ZIF9"/>
<dbReference type="OrthoDB" id="7108654at2759"/>
<dbReference type="Proteomes" id="UP000000763">
    <property type="component" value="Chromosome 2"/>
</dbReference>
<dbReference type="Proteomes" id="UP000059680">
    <property type="component" value="Chromosome 2"/>
</dbReference>
<dbReference type="GO" id="GO:0005576">
    <property type="term" value="C:extracellular region"/>
    <property type="evidence" value="ECO:0007669"/>
    <property type="project" value="UniProtKB-KW"/>
</dbReference>
<dbReference type="GO" id="GO:0004061">
    <property type="term" value="F:arylformamidase activity"/>
    <property type="evidence" value="ECO:0000318"/>
    <property type="project" value="GO_Central"/>
</dbReference>
<dbReference type="GO" id="GO:0019441">
    <property type="term" value="P:L-tryptophan catabolic process to kynurenine"/>
    <property type="evidence" value="ECO:0000318"/>
    <property type="project" value="GO_Central"/>
</dbReference>
<dbReference type="FunFam" id="3.50.30.50:FF:000002">
    <property type="entry name" value="Kynurenine formamidase"/>
    <property type="match status" value="1"/>
</dbReference>
<dbReference type="Gene3D" id="3.50.30.50">
    <property type="entry name" value="Putative cyclase"/>
    <property type="match status" value="1"/>
</dbReference>
<dbReference type="InterPro" id="IPR007325">
    <property type="entry name" value="KFase/CYL"/>
</dbReference>
<dbReference type="InterPro" id="IPR037175">
    <property type="entry name" value="KFase_sf"/>
</dbReference>
<dbReference type="PANTHER" id="PTHR31118:SF27">
    <property type="entry name" value="CYCLASE-LIKE PROTEIN 1"/>
    <property type="match status" value="1"/>
</dbReference>
<dbReference type="PANTHER" id="PTHR31118">
    <property type="entry name" value="CYCLASE-LIKE PROTEIN 2"/>
    <property type="match status" value="1"/>
</dbReference>
<dbReference type="Pfam" id="PF04199">
    <property type="entry name" value="Cyclase"/>
    <property type="match status" value="1"/>
</dbReference>
<dbReference type="SUPFAM" id="SSF102198">
    <property type="entry name" value="Putative cyclase"/>
    <property type="match status" value="1"/>
</dbReference>